<gene>
    <name type="primary">PSG9</name>
    <name type="synonym">PSG11</name>
</gene>
<evidence type="ECO:0000255" key="1"/>
<evidence type="ECO:0000255" key="2">
    <source>
        <dbReference type="PROSITE-ProRule" id="PRU00114"/>
    </source>
</evidence>
<evidence type="ECO:0000269" key="3">
    <source>
    </source>
</evidence>
<evidence type="ECO:0000303" key="4">
    <source>
    </source>
</evidence>
<evidence type="ECO:0000305" key="5"/>
<name>PSG9_HUMAN</name>
<feature type="signal peptide" evidence="1">
    <location>
        <begin position="1"/>
        <end position="34"/>
    </location>
</feature>
<feature type="chain" id="PRO_0000014916" description="Pregnancy-specific beta-1-glycoprotein 9">
    <location>
        <begin position="35"/>
        <end position="426"/>
    </location>
</feature>
<feature type="domain" description="Ig-like V-type">
    <location>
        <begin position="35"/>
        <end position="144"/>
    </location>
</feature>
<feature type="domain" description="Ig-like C2-type 1">
    <location>
        <begin position="147"/>
        <end position="234"/>
    </location>
</feature>
<feature type="domain" description="Ig-like C2-type 2">
    <location>
        <begin position="242"/>
        <end position="326"/>
    </location>
</feature>
<feature type="domain" description="Ig-like C2-type 3">
    <location>
        <begin position="335"/>
        <end position="410"/>
    </location>
</feature>
<feature type="short sequence motif" description="Cell attachment site" evidence="1">
    <location>
        <begin position="127"/>
        <end position="129"/>
    </location>
</feature>
<feature type="glycosylation site" description="N-linked (GlcNAc...) asparagine" evidence="1">
    <location>
        <position position="104"/>
    </location>
</feature>
<feature type="glycosylation site" description="N-linked (GlcNAc...) asparagine" evidence="1">
    <location>
        <position position="111"/>
    </location>
</feature>
<feature type="glycosylation site" description="N-linked (GlcNAc...) asparagine" evidence="1">
    <location>
        <position position="199"/>
    </location>
</feature>
<feature type="glycosylation site" description="N-linked (GlcNAc...) asparagine" evidence="1">
    <location>
        <position position="268"/>
    </location>
</feature>
<feature type="glycosylation site" description="N-linked (GlcNAc...) asparagine" evidence="1">
    <location>
        <position position="303"/>
    </location>
</feature>
<feature type="glycosylation site" description="N-linked (GlcNAc...) asparagine" evidence="1">
    <location>
        <position position="387"/>
    </location>
</feature>
<feature type="disulfide bond" evidence="2">
    <location>
        <begin position="169"/>
        <end position="217"/>
    </location>
</feature>
<feature type="disulfide bond" evidence="2">
    <location>
        <begin position="262"/>
        <end position="310"/>
    </location>
</feature>
<feature type="disulfide bond" evidence="2">
    <location>
        <begin position="354"/>
        <end position="394"/>
    </location>
</feature>
<feature type="splice variant" id="VSP_055602" description="In isoform 2." evidence="4">
    <original>PKLPIPYITINNLNPRENKDVLAFTCEPKSENYTYIWWLNGQSLPVSPGVKRPIENRILILPSVTRNETGPYQCEIRDRYGGLRSNPVILNVLY</original>
    <variation>H</variation>
    <location>
        <begin position="237"/>
        <end position="330"/>
    </location>
</feature>
<feature type="splice variant" id="VSP_055603" description="In isoform 2." evidence="4">
    <original>PCHGDLTESQS</original>
    <variation>KWIPASLAVGFYVESIWLSEKSQENIFIPSLCPMGTSKSQILLLNPPNLSLQTLFSLFFCFLMADLVSGLKKVGRGLYQP</variation>
    <location>
        <begin position="416"/>
        <end position="426"/>
    </location>
</feature>
<feature type="sequence variant" id="VAR_059410" description="In dbSNP:rs8101191.">
    <original>L</original>
    <variation>V</variation>
    <location>
        <position position="18"/>
    </location>
</feature>
<feature type="sequence variant" id="VAR_058296" description="In dbSNP:rs763005161.">
    <original>A</original>
    <variation>T</variation>
    <location>
        <position position="176"/>
    </location>
</feature>
<feature type="sequence variant" id="VAR_049925" description="In dbSNP:rs1135905.">
    <original>I</original>
    <variation>T</variation>
    <location>
        <position position="325"/>
    </location>
</feature>
<feature type="sequence variant" id="VAR_049926" description="In dbSNP:rs2074923.">
    <original>Q</original>
    <variation>L</variation>
    <location>
        <position position="374"/>
    </location>
</feature>
<feature type="sequence variant" id="VAR_049927" description="In dbSNP:rs2072285.">
    <original>H</original>
    <variation>R</variation>
    <location>
        <position position="397"/>
    </location>
</feature>
<feature type="sequence conflict" description="In Ref. 5; AAA60203." evidence="5" ref="5">
    <original>L</original>
    <variation>F</variation>
    <location>
        <position position="4"/>
    </location>
</feature>
<feature type="sequence conflict" description="In Ref. 5; AAA63251." evidence="5" ref="5">
    <original>K</original>
    <variation>Q</variation>
    <location>
        <position position="49"/>
    </location>
</feature>
<feature type="sequence conflict" description="In Ref. 1; CAA35612." evidence="5" ref="1">
    <original>Y</original>
    <variation>C</variation>
    <location>
        <position position="203"/>
    </location>
</feature>
<feature type="sequence conflict" description="In Ref. 5; AAA60203." evidence="5" ref="5">
    <original>S</original>
    <variation>I</variation>
    <location>
        <position position="226"/>
    </location>
</feature>
<feature type="sequence conflict" description="In Ref. 9; AAH20759." evidence="5" ref="9">
    <original>R</original>
    <variation>Q</variation>
    <location>
        <position position="313"/>
    </location>
</feature>
<feature type="sequence conflict" description="In Ref. 5; AAA63251." evidence="5" ref="5">
    <original>N</original>
    <variation>I</variation>
    <location>
        <position position="349"/>
    </location>
</feature>
<proteinExistence type="evidence at protein level"/>
<dbReference type="EMBL" id="X17610">
    <property type="protein sequence ID" value="CAA35612.1"/>
    <property type="molecule type" value="mRNA"/>
</dbReference>
<dbReference type="EMBL" id="M34421">
    <property type="protein sequence ID" value="AAA52605.1"/>
    <property type="molecule type" value="mRNA"/>
</dbReference>
<dbReference type="EMBL" id="M34481">
    <property type="protein sequence ID" value="AAA74512.1"/>
    <property type="molecule type" value="mRNA"/>
</dbReference>
<dbReference type="EMBL" id="M38046">
    <property type="protein sequence ID" value="AAA63251.1"/>
    <property type="molecule type" value="mRNA"/>
</dbReference>
<dbReference type="EMBL" id="M94890">
    <property type="protein sequence ID" value="AAA60194.1"/>
    <property type="molecule type" value="mRNA"/>
</dbReference>
<dbReference type="EMBL" id="M58591">
    <property type="protein sequence ID" value="AAA60203.1"/>
    <property type="molecule type" value="mRNA"/>
</dbReference>
<dbReference type="EMBL" id="AK313256">
    <property type="protein sequence ID" value="BAG36066.1"/>
    <property type="molecule type" value="mRNA"/>
</dbReference>
<dbReference type="EMBL" id="AC005392">
    <property type="status" value="NOT_ANNOTATED_CDS"/>
    <property type="molecule type" value="Genomic_DNA"/>
</dbReference>
<dbReference type="EMBL" id="CH471126">
    <property type="protein sequence ID" value="EAW57180.1"/>
    <property type="molecule type" value="Genomic_DNA"/>
</dbReference>
<dbReference type="EMBL" id="CH471126">
    <property type="protein sequence ID" value="EAW57183.1"/>
    <property type="molecule type" value="Genomic_DNA"/>
</dbReference>
<dbReference type="EMBL" id="BC020759">
    <property type="protein sequence ID" value="AAH20759.1"/>
    <property type="molecule type" value="mRNA"/>
</dbReference>
<dbReference type="EMBL" id="AH007520">
    <property type="protein sequence ID" value="AAD21023.1"/>
    <property type="molecule type" value="Genomic_DNA"/>
</dbReference>
<dbReference type="EMBL" id="M38243">
    <property type="protein sequence ID" value="AAA63252.1"/>
    <property type="molecule type" value="Genomic_DNA"/>
</dbReference>
<dbReference type="EMBL" id="U04325">
    <property type="protein sequence ID" value="AAA78266.1"/>
    <property type="molecule type" value="Genomic_DNA"/>
</dbReference>
<dbReference type="CCDS" id="CCDS12618.1">
    <molecule id="Q00887-1"/>
</dbReference>
<dbReference type="CCDS" id="CCDS92636.1">
    <molecule id="Q00887-2"/>
</dbReference>
<dbReference type="PIR" id="B35334">
    <property type="entry name" value="B35334"/>
</dbReference>
<dbReference type="PIR" id="C55181">
    <property type="entry name" value="C55181"/>
</dbReference>
<dbReference type="PIR" id="S09016">
    <property type="entry name" value="S09016"/>
</dbReference>
<dbReference type="RefSeq" id="NP_001288636.1">
    <property type="nucleotide sequence ID" value="NM_001301707.1"/>
</dbReference>
<dbReference type="RefSeq" id="NP_001288637.1">
    <property type="nucleotide sequence ID" value="NM_001301708.1"/>
</dbReference>
<dbReference type="RefSeq" id="NP_001288638.1">
    <property type="nucleotide sequence ID" value="NM_001301709.1"/>
</dbReference>
<dbReference type="RefSeq" id="NP_001398004.1">
    <molecule id="Q00887-2"/>
    <property type="nucleotide sequence ID" value="NM_001411075.1"/>
</dbReference>
<dbReference type="RefSeq" id="NP_002775.3">
    <molecule id="Q00887-1"/>
    <property type="nucleotide sequence ID" value="NM_002784.4"/>
</dbReference>
<dbReference type="RefSeq" id="XP_005259132.1">
    <property type="nucleotide sequence ID" value="XM_005259075.3"/>
</dbReference>
<dbReference type="SMR" id="Q00887"/>
<dbReference type="BioGRID" id="111652">
    <property type="interactions" value="30"/>
</dbReference>
<dbReference type="FunCoup" id="Q00887">
    <property type="interactions" value="33"/>
</dbReference>
<dbReference type="IntAct" id="Q00887">
    <property type="interactions" value="20"/>
</dbReference>
<dbReference type="MINT" id="Q00887"/>
<dbReference type="STRING" id="9606.ENSP00000270077"/>
<dbReference type="GlyCosmos" id="Q00887">
    <property type="glycosylation" value="6 sites, No reported glycans"/>
</dbReference>
<dbReference type="GlyGen" id="Q00887">
    <property type="glycosylation" value="7 sites, 1 O-linked glycan (1 site)"/>
</dbReference>
<dbReference type="iPTMnet" id="Q00887"/>
<dbReference type="PhosphoSitePlus" id="Q00887"/>
<dbReference type="BioMuta" id="PSG9"/>
<dbReference type="DMDM" id="6093845"/>
<dbReference type="MassIVE" id="Q00887"/>
<dbReference type="PaxDb" id="9606-ENSP00000270077"/>
<dbReference type="PeptideAtlas" id="Q00887"/>
<dbReference type="ProteomicsDB" id="57879">
    <molecule id="Q00887-1"/>
</dbReference>
<dbReference type="ProteomicsDB" id="60493"/>
<dbReference type="Antibodypedia" id="17573">
    <property type="antibodies" value="189 antibodies from 20 providers"/>
</dbReference>
<dbReference type="DNASU" id="5678"/>
<dbReference type="Ensembl" id="ENST00000244293.11">
    <molecule id="Q00887-2"/>
    <property type="protein sequence ID" value="ENSP00000244293.7"/>
    <property type="gene ID" value="ENSG00000183668.18"/>
</dbReference>
<dbReference type="Ensembl" id="ENST00000270077.8">
    <molecule id="Q00887-1"/>
    <property type="protein sequence ID" value="ENSP00000270077.3"/>
    <property type="gene ID" value="ENSG00000183668.18"/>
</dbReference>
<dbReference type="GeneID" id="5678"/>
<dbReference type="KEGG" id="hsa:5678"/>
<dbReference type="MANE-Select" id="ENST00000270077.8">
    <property type="protein sequence ID" value="ENSP00000270077.3"/>
    <property type="RefSeq nucleotide sequence ID" value="NM_002784.5"/>
    <property type="RefSeq protein sequence ID" value="NP_002775.3"/>
</dbReference>
<dbReference type="UCSC" id="uc002owd.5">
    <molecule id="Q00887-1"/>
    <property type="organism name" value="human"/>
</dbReference>
<dbReference type="AGR" id="HGNC:9526"/>
<dbReference type="CTD" id="5678"/>
<dbReference type="DisGeNET" id="5678"/>
<dbReference type="GeneCards" id="PSG9"/>
<dbReference type="HGNC" id="HGNC:9526">
    <property type="gene designation" value="PSG9"/>
</dbReference>
<dbReference type="HPA" id="ENSG00000183668">
    <property type="expression patterns" value="Tissue enriched (placenta)"/>
</dbReference>
<dbReference type="MIM" id="176398">
    <property type="type" value="gene"/>
</dbReference>
<dbReference type="neXtProt" id="NX_Q00887"/>
<dbReference type="OpenTargets" id="ENSG00000183668"/>
<dbReference type="PharmGKB" id="PA33871"/>
<dbReference type="VEuPathDB" id="HostDB:ENSG00000183668"/>
<dbReference type="eggNOG" id="ENOG502RXPD">
    <property type="taxonomic scope" value="Eukaryota"/>
</dbReference>
<dbReference type="GeneTree" id="ENSGT01100000263479"/>
<dbReference type="InParanoid" id="Q00887"/>
<dbReference type="OMA" id="CWILAVC"/>
<dbReference type="OrthoDB" id="6159398at2759"/>
<dbReference type="PAN-GO" id="Q00887">
    <property type="GO annotations" value="5 GO annotations based on evolutionary models"/>
</dbReference>
<dbReference type="PhylomeDB" id="Q00887"/>
<dbReference type="TreeFam" id="TF336859"/>
<dbReference type="PathwayCommons" id="Q00887"/>
<dbReference type="Reactome" id="R-HSA-202733">
    <property type="pathway name" value="Cell surface interactions at the vascular wall"/>
</dbReference>
<dbReference type="SignaLink" id="Q00887"/>
<dbReference type="BioGRID-ORCS" id="5678">
    <property type="hits" value="8 hits in 1040 CRISPR screens"/>
</dbReference>
<dbReference type="ChiTaRS" id="PSG9">
    <property type="organism name" value="human"/>
</dbReference>
<dbReference type="GeneWiki" id="PSG9"/>
<dbReference type="GenomeRNAi" id="5678"/>
<dbReference type="Pharos" id="Q00887">
    <property type="development level" value="Tbio"/>
</dbReference>
<dbReference type="PRO" id="PR:Q00887"/>
<dbReference type="Proteomes" id="UP000005640">
    <property type="component" value="Chromosome 19"/>
</dbReference>
<dbReference type="RNAct" id="Q00887">
    <property type="molecule type" value="protein"/>
</dbReference>
<dbReference type="Bgee" id="ENSG00000183668">
    <property type="expression patterns" value="Expressed in placenta and 41 other cell types or tissues"/>
</dbReference>
<dbReference type="ExpressionAtlas" id="Q00887">
    <property type="expression patterns" value="baseline and differential"/>
</dbReference>
<dbReference type="GO" id="GO:0005576">
    <property type="term" value="C:extracellular region"/>
    <property type="evidence" value="ECO:0007669"/>
    <property type="project" value="UniProtKB-SubCell"/>
</dbReference>
<dbReference type="GO" id="GO:0070021">
    <property type="term" value="C:transforming growth factor beta ligand-receptor complex"/>
    <property type="evidence" value="ECO:0000314"/>
    <property type="project" value="UniProtKB"/>
</dbReference>
<dbReference type="GO" id="GO:0044877">
    <property type="term" value="F:protein-containing complex binding"/>
    <property type="evidence" value="ECO:0000314"/>
    <property type="project" value="UniProtKB"/>
</dbReference>
<dbReference type="GO" id="GO:0002774">
    <property type="term" value="P:Fc receptor mediated inhibitory signaling pathway"/>
    <property type="evidence" value="ECO:0000314"/>
    <property type="project" value="UniProtKB"/>
</dbReference>
<dbReference type="GO" id="GO:0007565">
    <property type="term" value="P:female pregnancy"/>
    <property type="evidence" value="ECO:0000304"/>
    <property type="project" value="UniProtKB"/>
</dbReference>
<dbReference type="GO" id="GO:1900016">
    <property type="term" value="P:negative regulation of cytokine production involved in inflammatory response"/>
    <property type="evidence" value="ECO:0000314"/>
    <property type="project" value="UniProtKB"/>
</dbReference>
<dbReference type="GO" id="GO:0060391">
    <property type="term" value="P:positive regulation of SMAD protein signal transduction"/>
    <property type="evidence" value="ECO:0000314"/>
    <property type="project" value="UniProtKB"/>
</dbReference>
<dbReference type="GO" id="GO:0045589">
    <property type="term" value="P:regulation of regulatory T cell differentiation"/>
    <property type="evidence" value="ECO:0000314"/>
    <property type="project" value="UniProtKB"/>
</dbReference>
<dbReference type="GO" id="GO:0002461">
    <property type="term" value="P:tolerance induction dependent upon immune response"/>
    <property type="evidence" value="ECO:0000314"/>
    <property type="project" value="UniProtKB"/>
</dbReference>
<dbReference type="GO" id="GO:0007179">
    <property type="term" value="P:transforming growth factor beta receptor signaling pathway"/>
    <property type="evidence" value="ECO:0000314"/>
    <property type="project" value="UniProtKB"/>
</dbReference>
<dbReference type="CDD" id="cd20948">
    <property type="entry name" value="IgC2_CEACAM5-like"/>
    <property type="match status" value="1"/>
</dbReference>
<dbReference type="CDD" id="cd05740">
    <property type="entry name" value="IgI_hCEACAM_2_4_6_like"/>
    <property type="match status" value="1"/>
</dbReference>
<dbReference type="CDD" id="cd05774">
    <property type="entry name" value="IgV_CEACAM_D1"/>
    <property type="match status" value="1"/>
</dbReference>
<dbReference type="FunFam" id="2.60.40.10:FF:000340">
    <property type="entry name" value="Carcinoembryonic antigen-related cell adhesion molecule 1"/>
    <property type="match status" value="1"/>
</dbReference>
<dbReference type="FunFam" id="2.60.40.10:FF:000517">
    <property type="entry name" value="Carcinoembryonic antigen-related cell adhesion molecule 1"/>
    <property type="match status" value="1"/>
</dbReference>
<dbReference type="FunFam" id="2.60.40.10:FF:000244">
    <property type="entry name" value="carcinoembryonic antigen-related cell adhesion molecule 16"/>
    <property type="match status" value="2"/>
</dbReference>
<dbReference type="Gene3D" id="2.60.40.10">
    <property type="entry name" value="Immunoglobulins"/>
    <property type="match status" value="4"/>
</dbReference>
<dbReference type="InterPro" id="IPR050831">
    <property type="entry name" value="CEA_cell_adhesion"/>
</dbReference>
<dbReference type="InterPro" id="IPR007110">
    <property type="entry name" value="Ig-like_dom"/>
</dbReference>
<dbReference type="InterPro" id="IPR036179">
    <property type="entry name" value="Ig-like_dom_sf"/>
</dbReference>
<dbReference type="InterPro" id="IPR013783">
    <property type="entry name" value="Ig-like_fold"/>
</dbReference>
<dbReference type="InterPro" id="IPR003599">
    <property type="entry name" value="Ig_sub"/>
</dbReference>
<dbReference type="InterPro" id="IPR003598">
    <property type="entry name" value="Ig_sub2"/>
</dbReference>
<dbReference type="InterPro" id="IPR013106">
    <property type="entry name" value="Ig_V-set"/>
</dbReference>
<dbReference type="PANTHER" id="PTHR44427">
    <property type="entry name" value="CARCINOEMBRYONIC ANTIGEN-RELATED CELL ADHESION MOLECULE 19"/>
    <property type="match status" value="1"/>
</dbReference>
<dbReference type="PANTHER" id="PTHR44427:SF14">
    <property type="entry name" value="PREGNANCY-SPECIFIC BETA-1-GLYCOPROTEIN 9"/>
    <property type="match status" value="1"/>
</dbReference>
<dbReference type="Pfam" id="PF13895">
    <property type="entry name" value="Ig_2"/>
    <property type="match status" value="1"/>
</dbReference>
<dbReference type="Pfam" id="PF07686">
    <property type="entry name" value="V-set"/>
    <property type="match status" value="1"/>
</dbReference>
<dbReference type="SMART" id="SM00409">
    <property type="entry name" value="IG"/>
    <property type="match status" value="4"/>
</dbReference>
<dbReference type="SMART" id="SM00408">
    <property type="entry name" value="IGc2"/>
    <property type="match status" value="3"/>
</dbReference>
<dbReference type="SUPFAM" id="SSF48726">
    <property type="entry name" value="Immunoglobulin"/>
    <property type="match status" value="4"/>
</dbReference>
<dbReference type="PROSITE" id="PS50835">
    <property type="entry name" value="IG_LIKE"/>
    <property type="match status" value="3"/>
</dbReference>
<keyword id="KW-0025">Alternative splicing</keyword>
<keyword id="KW-1015">Disulfide bond</keyword>
<keyword id="KW-0325">Glycoprotein</keyword>
<keyword id="KW-0393">Immunoglobulin domain</keyword>
<keyword id="KW-1267">Proteomics identification</keyword>
<keyword id="KW-1185">Reference proteome</keyword>
<keyword id="KW-0677">Repeat</keyword>
<keyword id="KW-0964">Secreted</keyword>
<keyword id="KW-0732">Signal</keyword>
<reference key="1">
    <citation type="journal article" date="1990" name="Biochim. Biophys. Acta">
        <title>The nucleotide and deduced amino acid sequences of a cDNA encoding a new species of pregnancy-specific beta 1-glycoprotein (PS beta G).</title>
        <authorList>
            <person name="Arakawa F."/>
            <person name="Kuroki M."/>
            <person name="Misumi Y."/>
            <person name="Matsuo Y."/>
            <person name="Matsuoka Y."/>
        </authorList>
    </citation>
    <scope>NUCLEOTIDE SEQUENCE [MRNA] (ISOFORM 1)</scope>
    <source>
        <tissue>Placenta</tissue>
    </source>
</reference>
<reference key="2">
    <citation type="journal article" date="1990" name="Genomics">
        <title>Structure, evolution and chromosomal localization of the human pregnancy-specific beta 1 glycoprotein gene family.</title>
        <authorList>
            <person name="Streydio C."/>
            <person name="Swillens S."/>
            <person name="Georges M."/>
            <person name="Szpirer C."/>
            <person name="Vassart G."/>
        </authorList>
    </citation>
    <scope>NUCLEOTIDE SEQUENCE [MRNA] (ISOFORM 1)</scope>
    <source>
        <tissue>Placenta</tissue>
    </source>
</reference>
<reference key="3">
    <citation type="journal article" date="1990" name="Biochem. Biophys. Res. Commun.">
        <title>Identification of a new carcinoembryonic antigen (CEA) family member in human fetal liver -- cloning and sequence determination of pregnancy-specific glycoprotein 7.</title>
        <authorList>
            <person name="Khan W.N."/>
            <person name="Hammarstroem S."/>
        </authorList>
    </citation>
    <scope>NUCLEOTIDE SEQUENCE [MRNA] (ISOFORM 1)</scope>
    <source>
        <tissue>Fetal liver</tissue>
    </source>
</reference>
<reference key="4">
    <citation type="journal article" date="1991" name="Mol. Cell. Biochem.">
        <title>Characterization of new members of the pregnancy-specific beta 1-glycoprotein family.</title>
        <authorList>
            <person name="Chan W.Y."/>
            <person name="Zheng Q.X."/>
            <person name="McMahon J."/>
            <person name="Tease L.A."/>
        </authorList>
    </citation>
    <scope>NUCLEOTIDE SEQUENCE [MRNA] (ISOFORM 2)</scope>
    <source>
        <tissue>Placenta</tissue>
    </source>
</reference>
<reference key="5">
    <citation type="journal article" date="1992" name="Biochim. Biophys. Acta">
        <title>cDNA sequence of the pregnancy-specific beta 1-glycoprotein-11s (PSG-11s).</title>
        <authorList>
            <person name="Brophy B.K."/>
            <person name="MacDonald R.E."/>
            <person name="McLenachan P.A."/>
            <person name="Mansfield B.C."/>
        </authorList>
    </citation>
    <scope>NUCLEOTIDE SEQUENCE [MRNA] (ISOFORM 1)</scope>
    <source>
        <tissue>Placenta</tissue>
    </source>
</reference>
<reference key="6">
    <citation type="journal article" date="2004" name="Nat. Genet.">
        <title>Complete sequencing and characterization of 21,243 full-length human cDNAs.</title>
        <authorList>
            <person name="Ota T."/>
            <person name="Suzuki Y."/>
            <person name="Nishikawa T."/>
            <person name="Otsuki T."/>
            <person name="Sugiyama T."/>
            <person name="Irie R."/>
            <person name="Wakamatsu A."/>
            <person name="Hayashi K."/>
            <person name="Sato H."/>
            <person name="Nagai K."/>
            <person name="Kimura K."/>
            <person name="Makita H."/>
            <person name="Sekine M."/>
            <person name="Obayashi M."/>
            <person name="Nishi T."/>
            <person name="Shibahara T."/>
            <person name="Tanaka T."/>
            <person name="Ishii S."/>
            <person name="Yamamoto J."/>
            <person name="Saito K."/>
            <person name="Kawai Y."/>
            <person name="Isono Y."/>
            <person name="Nakamura Y."/>
            <person name="Nagahari K."/>
            <person name="Murakami K."/>
            <person name="Yasuda T."/>
            <person name="Iwayanagi T."/>
            <person name="Wagatsuma M."/>
            <person name="Shiratori A."/>
            <person name="Sudo H."/>
            <person name="Hosoiri T."/>
            <person name="Kaku Y."/>
            <person name="Kodaira H."/>
            <person name="Kondo H."/>
            <person name="Sugawara M."/>
            <person name="Takahashi M."/>
            <person name="Kanda K."/>
            <person name="Yokoi T."/>
            <person name="Furuya T."/>
            <person name="Kikkawa E."/>
            <person name="Omura Y."/>
            <person name="Abe K."/>
            <person name="Kamihara K."/>
            <person name="Katsuta N."/>
            <person name="Sato K."/>
            <person name="Tanikawa M."/>
            <person name="Yamazaki M."/>
            <person name="Ninomiya K."/>
            <person name="Ishibashi T."/>
            <person name="Yamashita H."/>
            <person name="Murakawa K."/>
            <person name="Fujimori K."/>
            <person name="Tanai H."/>
            <person name="Kimata M."/>
            <person name="Watanabe M."/>
            <person name="Hiraoka S."/>
            <person name="Chiba Y."/>
            <person name="Ishida S."/>
            <person name="Ono Y."/>
            <person name="Takiguchi S."/>
            <person name="Watanabe S."/>
            <person name="Yosida M."/>
            <person name="Hotuta T."/>
            <person name="Kusano J."/>
            <person name="Kanehori K."/>
            <person name="Takahashi-Fujii A."/>
            <person name="Hara H."/>
            <person name="Tanase T.-O."/>
            <person name="Nomura Y."/>
            <person name="Togiya S."/>
            <person name="Komai F."/>
            <person name="Hara R."/>
            <person name="Takeuchi K."/>
            <person name="Arita M."/>
            <person name="Imose N."/>
            <person name="Musashino K."/>
            <person name="Yuuki H."/>
            <person name="Oshima A."/>
            <person name="Sasaki N."/>
            <person name="Aotsuka S."/>
            <person name="Yoshikawa Y."/>
            <person name="Matsunawa H."/>
            <person name="Ichihara T."/>
            <person name="Shiohata N."/>
            <person name="Sano S."/>
            <person name="Moriya S."/>
            <person name="Momiyama H."/>
            <person name="Satoh N."/>
            <person name="Takami S."/>
            <person name="Terashima Y."/>
            <person name="Suzuki O."/>
            <person name="Nakagawa S."/>
            <person name="Senoh A."/>
            <person name="Mizoguchi H."/>
            <person name="Goto Y."/>
            <person name="Shimizu F."/>
            <person name="Wakebe H."/>
            <person name="Hishigaki H."/>
            <person name="Watanabe T."/>
            <person name="Sugiyama A."/>
            <person name="Takemoto M."/>
            <person name="Kawakami B."/>
            <person name="Yamazaki M."/>
            <person name="Watanabe K."/>
            <person name="Kumagai A."/>
            <person name="Itakura S."/>
            <person name="Fukuzumi Y."/>
            <person name="Fujimori Y."/>
            <person name="Komiyama M."/>
            <person name="Tashiro H."/>
            <person name="Tanigami A."/>
            <person name="Fujiwara T."/>
            <person name="Ono T."/>
            <person name="Yamada K."/>
            <person name="Fujii Y."/>
            <person name="Ozaki K."/>
            <person name="Hirao M."/>
            <person name="Ohmori Y."/>
            <person name="Kawabata A."/>
            <person name="Hikiji T."/>
            <person name="Kobatake N."/>
            <person name="Inagaki H."/>
            <person name="Ikema Y."/>
            <person name="Okamoto S."/>
            <person name="Okitani R."/>
            <person name="Kawakami T."/>
            <person name="Noguchi S."/>
            <person name="Itoh T."/>
            <person name="Shigeta K."/>
            <person name="Senba T."/>
            <person name="Matsumura K."/>
            <person name="Nakajima Y."/>
            <person name="Mizuno T."/>
            <person name="Morinaga M."/>
            <person name="Sasaki M."/>
            <person name="Togashi T."/>
            <person name="Oyama M."/>
            <person name="Hata H."/>
            <person name="Watanabe M."/>
            <person name="Komatsu T."/>
            <person name="Mizushima-Sugano J."/>
            <person name="Satoh T."/>
            <person name="Shirai Y."/>
            <person name="Takahashi Y."/>
            <person name="Nakagawa K."/>
            <person name="Okumura K."/>
            <person name="Nagase T."/>
            <person name="Nomura N."/>
            <person name="Kikuchi H."/>
            <person name="Masuho Y."/>
            <person name="Yamashita R."/>
            <person name="Nakai K."/>
            <person name="Yada T."/>
            <person name="Nakamura Y."/>
            <person name="Ohara O."/>
            <person name="Isogai T."/>
            <person name="Sugano S."/>
        </authorList>
    </citation>
    <scope>NUCLEOTIDE SEQUENCE [LARGE SCALE MRNA] (ISOFORM 1)</scope>
    <source>
        <tissue>Placenta</tissue>
    </source>
</reference>
<reference key="7">
    <citation type="journal article" date="2004" name="Nature">
        <title>The DNA sequence and biology of human chromosome 19.</title>
        <authorList>
            <person name="Grimwood J."/>
            <person name="Gordon L.A."/>
            <person name="Olsen A.S."/>
            <person name="Terry A."/>
            <person name="Schmutz J."/>
            <person name="Lamerdin J.E."/>
            <person name="Hellsten U."/>
            <person name="Goodstein D."/>
            <person name="Couronne O."/>
            <person name="Tran-Gyamfi M."/>
            <person name="Aerts A."/>
            <person name="Altherr M."/>
            <person name="Ashworth L."/>
            <person name="Bajorek E."/>
            <person name="Black S."/>
            <person name="Branscomb E."/>
            <person name="Caenepeel S."/>
            <person name="Carrano A.V."/>
            <person name="Caoile C."/>
            <person name="Chan Y.M."/>
            <person name="Christensen M."/>
            <person name="Cleland C.A."/>
            <person name="Copeland A."/>
            <person name="Dalin E."/>
            <person name="Dehal P."/>
            <person name="Denys M."/>
            <person name="Detter J.C."/>
            <person name="Escobar J."/>
            <person name="Flowers D."/>
            <person name="Fotopulos D."/>
            <person name="Garcia C."/>
            <person name="Georgescu A.M."/>
            <person name="Glavina T."/>
            <person name="Gomez M."/>
            <person name="Gonzales E."/>
            <person name="Groza M."/>
            <person name="Hammon N."/>
            <person name="Hawkins T."/>
            <person name="Haydu L."/>
            <person name="Ho I."/>
            <person name="Huang W."/>
            <person name="Israni S."/>
            <person name="Jett J."/>
            <person name="Kadner K."/>
            <person name="Kimball H."/>
            <person name="Kobayashi A."/>
            <person name="Larionov V."/>
            <person name="Leem S.-H."/>
            <person name="Lopez F."/>
            <person name="Lou Y."/>
            <person name="Lowry S."/>
            <person name="Malfatti S."/>
            <person name="Martinez D."/>
            <person name="McCready P.M."/>
            <person name="Medina C."/>
            <person name="Morgan J."/>
            <person name="Nelson K."/>
            <person name="Nolan M."/>
            <person name="Ovcharenko I."/>
            <person name="Pitluck S."/>
            <person name="Pollard M."/>
            <person name="Popkie A.P."/>
            <person name="Predki P."/>
            <person name="Quan G."/>
            <person name="Ramirez L."/>
            <person name="Rash S."/>
            <person name="Retterer J."/>
            <person name="Rodriguez A."/>
            <person name="Rogers S."/>
            <person name="Salamov A."/>
            <person name="Salazar A."/>
            <person name="She X."/>
            <person name="Smith D."/>
            <person name="Slezak T."/>
            <person name="Solovyev V."/>
            <person name="Thayer N."/>
            <person name="Tice H."/>
            <person name="Tsai M."/>
            <person name="Ustaszewska A."/>
            <person name="Vo N."/>
            <person name="Wagner M."/>
            <person name="Wheeler J."/>
            <person name="Wu K."/>
            <person name="Xie G."/>
            <person name="Yang J."/>
            <person name="Dubchak I."/>
            <person name="Furey T.S."/>
            <person name="DeJong P."/>
            <person name="Dickson M."/>
            <person name="Gordon D."/>
            <person name="Eichler E.E."/>
            <person name="Pennacchio L.A."/>
            <person name="Richardson P."/>
            <person name="Stubbs L."/>
            <person name="Rokhsar D.S."/>
            <person name="Myers R.M."/>
            <person name="Rubin E.M."/>
            <person name="Lucas S.M."/>
        </authorList>
    </citation>
    <scope>NUCLEOTIDE SEQUENCE [LARGE SCALE GENOMIC DNA]</scope>
</reference>
<reference key="8">
    <citation type="submission" date="2005-07" db="EMBL/GenBank/DDBJ databases">
        <authorList>
            <person name="Mural R.J."/>
            <person name="Istrail S."/>
            <person name="Sutton G.G."/>
            <person name="Florea L."/>
            <person name="Halpern A.L."/>
            <person name="Mobarry C.M."/>
            <person name="Lippert R."/>
            <person name="Walenz B."/>
            <person name="Shatkay H."/>
            <person name="Dew I."/>
            <person name="Miller J.R."/>
            <person name="Flanigan M.J."/>
            <person name="Edwards N.J."/>
            <person name="Bolanos R."/>
            <person name="Fasulo D."/>
            <person name="Halldorsson B.V."/>
            <person name="Hannenhalli S."/>
            <person name="Turner R."/>
            <person name="Yooseph S."/>
            <person name="Lu F."/>
            <person name="Nusskern D.R."/>
            <person name="Shue B.C."/>
            <person name="Zheng X.H."/>
            <person name="Zhong F."/>
            <person name="Delcher A.L."/>
            <person name="Huson D.H."/>
            <person name="Kravitz S.A."/>
            <person name="Mouchard L."/>
            <person name="Reinert K."/>
            <person name="Remington K.A."/>
            <person name="Clark A.G."/>
            <person name="Waterman M.S."/>
            <person name="Eichler E.E."/>
            <person name="Adams M.D."/>
            <person name="Hunkapiller M.W."/>
            <person name="Myers E.W."/>
            <person name="Venter J.C."/>
        </authorList>
    </citation>
    <scope>NUCLEOTIDE SEQUENCE [LARGE SCALE GENOMIC DNA]</scope>
</reference>
<reference key="9">
    <citation type="journal article" date="2004" name="Genome Res.">
        <title>The status, quality, and expansion of the NIH full-length cDNA project: the Mammalian Gene Collection (MGC).</title>
        <authorList>
            <consortium name="The MGC Project Team"/>
        </authorList>
    </citation>
    <scope>NUCLEOTIDE SEQUENCE [LARGE SCALE MRNA] (ISOFORM 1)</scope>
    <source>
        <tissue>Placenta</tissue>
    </source>
</reference>
<reference key="10">
    <citation type="submission" date="1998-11" db="EMBL/GenBank/DDBJ databases">
        <title>Characterization of upstream promotor region, exon1 and exon2 of the PSG gene family.</title>
        <authorList>
            <person name="Fraengsmyr L."/>
            <person name="Teglund S."/>
            <person name="Israelsson A."/>
            <person name="Hammarstroem S."/>
        </authorList>
    </citation>
    <scope>NUCLEOTIDE SEQUENCE OF 1-143</scope>
</reference>
<reference key="11">
    <citation type="submission" date="1991-08" db="EMBL/GenBank/DDBJ databases">
        <authorList>
            <person name="Beggs K.T."/>
            <person name="McLenachan T."/>
            <person name="Mansfield B."/>
        </authorList>
    </citation>
    <scope>NUCLEOTIDE SEQUENCE OF 23-143</scope>
    <source>
        <tissue>Peripheral blood</tissue>
    </source>
</reference>
<reference key="12">
    <citation type="journal article" date="1994" name="Genomics">
        <title>Characterization of the PSG11 gene.</title>
        <authorList>
            <person name="McLenachan P.A."/>
            <person name="Rutherfurd K.J."/>
            <person name="Beggs K.T."/>
            <person name="Sims S.E."/>
            <person name="Mansfield B.C."/>
        </authorList>
    </citation>
    <scope>NUCLEOTIDE SEQUENCE [GENOMIC DNA] OF 416-426</scope>
</reference>
<reference key="13">
    <citation type="journal article" date="2016" name="PLoS ONE">
        <title>PSG9 Stimulates Increase in FoxP3+ Regulatory T-Cells through the TGF-beta1 Pathway.</title>
        <authorList>
            <person name="Jones K."/>
            <person name="Ballesteros A."/>
            <person name="Mentink-Kane M."/>
            <person name="Warren J."/>
            <person name="Rattila S."/>
            <person name="Malech H."/>
            <person name="Kang E."/>
            <person name="Dveksler G."/>
        </authorList>
    </citation>
    <scope>FUNCTION</scope>
    <scope>INTERACTION WITH LATENCY-ASSOCIATED PEPTIDE</scope>
</reference>
<reference key="14">
    <citation type="journal article" date="2017" name="PLoS ONE">
        <authorList>
            <consortium name="PLOS ONE Staff"/>
        </authorList>
    </citation>
    <scope>ERRATUM OF PUBMED:27389696</scope>
</reference>
<comment type="function">
    <text evidence="3">Binds to the small latent transforming growth factor-beta complex, consisting of the N-terminal TGFB1 latency-associated peptide (LAP) and the mature form of TGFB1, thereby leading to the activation of TGFB1 (PubMed:27389696). The activation of TGFB1 leads to stimulation of naive CD4(+) T-cells to increase FoxP3 expression and to an increase in the number of FoxP3(+) regulatory T-cells (PubMed:27389696). Induces the differentiation of a suppressive CD4(+)LAP(+)FoxP3(-) T-cell subset (PubMed:27389696). Induces the secretion of TGFB1 in macrophages, but not in activated CD4(+) T-cells (PubMed:27389696). May reduce the expression of several pro-inflammatory cytokines and chemokines by CD4(+) T-cells, including IL2 and IL6 (PubMed:27389696).</text>
</comment>
<comment type="subunit">
    <text evidence="3">Interacts with latency-associated peptide; leading to TGFB1 activation.</text>
</comment>
<comment type="subcellular location">
    <subcellularLocation>
        <location evidence="5">Secreted</location>
    </subcellularLocation>
</comment>
<comment type="alternative products">
    <event type="alternative splicing"/>
    <isoform>
        <id>Q00887-1</id>
        <name>1</name>
        <sequence type="displayed"/>
    </isoform>
    <isoform>
        <id>Q00887-2</id>
        <name>2</name>
        <sequence type="described" ref="VSP_055602 VSP_055603"/>
    </isoform>
</comment>
<comment type="developmental stage">
    <text>PSBG are produced in high quantity during pregnancy.</text>
</comment>
<comment type="similarity">
    <text evidence="5">Belongs to the immunoglobulin superfamily. CEA family.</text>
</comment>
<accession>Q00887</accession>
<accession>B2R869</accession>
<accession>Q15227</accession>
<accession>Q15236</accession>
<accession>Q15237</accession>
<accession>Q8WW78</accession>
<accession>Q9UQ73</accession>
<sequence>MGPLPAPSCTQRITWKGLLLTASLLNFWNPPTTAEVTIEAQPPKVSEGKDVLLLVHNLPQNLPGYFWYKGEMTDLYHYIISYIVDGKIIIYGPAYSGRETVYSNASLLIQNVTRKDAGTYTLHIIKRGDETREEIRHFTFTLYLETPKPYISSSNLNPREAMEAVRLICDPETLDASYLWWMNGQSLPVTHRLQLSKTNRTLYLFGVTKYIAGPYECEIRNPVSASRSDPVTLNLLPKLPIPYITINNLNPRENKDVLAFTCEPKSENYTYIWWLNGQSLPVSPGVKRPIENRILILPSVTRNETGPYQCEIRDRYGGLRSNPVILNVLYGPDLPRIYPSFTYYRSGENLDLSCFTESNPPAEYFWTINGKFQQSGQKLFIPQITRNHSGLYACSVHNSATGKEISKSMTVKVSGPCHGDLTESQS</sequence>
<protein>
    <recommendedName>
        <fullName>Pregnancy-specific beta-1-glycoprotein 9</fullName>
        <shortName>PS-beta-G-9</shortName>
        <shortName>PSBG-9</shortName>
        <shortName>Pregnancy-specific glycoprotein 9</shortName>
    </recommendedName>
    <alternativeName>
        <fullName>PS34</fullName>
    </alternativeName>
    <alternativeName>
        <fullName>Pregnancy-specific beta-1 glycoprotein B</fullName>
        <shortName>PS-beta-B</shortName>
    </alternativeName>
    <alternativeName>
        <fullName>Pregnancy-specific beta-1-glycoprotein 11</fullName>
        <shortName>PS-beta-G-11</shortName>
        <shortName>PSBG-11</shortName>
        <shortName>Pregnancy-specific glycoprotein 11</shortName>
    </alternativeName>
    <alternativeName>
        <fullName>Pregnancy-specific glycoprotein 7</fullName>
        <shortName>PSG7</shortName>
    </alternativeName>
</protein>
<organism>
    <name type="scientific">Homo sapiens</name>
    <name type="common">Human</name>
    <dbReference type="NCBI Taxonomy" id="9606"/>
    <lineage>
        <taxon>Eukaryota</taxon>
        <taxon>Metazoa</taxon>
        <taxon>Chordata</taxon>
        <taxon>Craniata</taxon>
        <taxon>Vertebrata</taxon>
        <taxon>Euteleostomi</taxon>
        <taxon>Mammalia</taxon>
        <taxon>Eutheria</taxon>
        <taxon>Euarchontoglires</taxon>
        <taxon>Primates</taxon>
        <taxon>Haplorrhini</taxon>
        <taxon>Catarrhini</taxon>
        <taxon>Hominidae</taxon>
        <taxon>Homo</taxon>
    </lineage>
</organism>